<protein>
    <recommendedName>
        <fullName evidence="1">Small ribosomal subunit protein bS18</fullName>
    </recommendedName>
    <alternativeName>
        <fullName evidence="2">30S ribosomal protein S18</fullName>
    </alternativeName>
</protein>
<name>RS18_RICRS</name>
<dbReference type="EMBL" id="CP000848">
    <property type="protein sequence ID" value="ABV75670.1"/>
    <property type="molecule type" value="Genomic_DNA"/>
</dbReference>
<dbReference type="RefSeq" id="WP_004996865.1">
    <property type="nucleotide sequence ID" value="NZ_CP121767.1"/>
</dbReference>
<dbReference type="SMR" id="A8GQJ5"/>
<dbReference type="GeneID" id="95361797"/>
<dbReference type="KEGG" id="rri:A1G_00410"/>
<dbReference type="HOGENOM" id="CLU_148710_2_1_5"/>
<dbReference type="Proteomes" id="UP000006832">
    <property type="component" value="Chromosome"/>
</dbReference>
<dbReference type="GO" id="GO:0022627">
    <property type="term" value="C:cytosolic small ribosomal subunit"/>
    <property type="evidence" value="ECO:0007669"/>
    <property type="project" value="TreeGrafter"/>
</dbReference>
<dbReference type="GO" id="GO:0070181">
    <property type="term" value="F:small ribosomal subunit rRNA binding"/>
    <property type="evidence" value="ECO:0007669"/>
    <property type="project" value="TreeGrafter"/>
</dbReference>
<dbReference type="GO" id="GO:0003735">
    <property type="term" value="F:structural constituent of ribosome"/>
    <property type="evidence" value="ECO:0007669"/>
    <property type="project" value="InterPro"/>
</dbReference>
<dbReference type="GO" id="GO:0006412">
    <property type="term" value="P:translation"/>
    <property type="evidence" value="ECO:0007669"/>
    <property type="project" value="UniProtKB-UniRule"/>
</dbReference>
<dbReference type="Gene3D" id="4.10.640.10">
    <property type="entry name" value="Ribosomal protein S18"/>
    <property type="match status" value="1"/>
</dbReference>
<dbReference type="HAMAP" id="MF_00270">
    <property type="entry name" value="Ribosomal_bS18"/>
    <property type="match status" value="1"/>
</dbReference>
<dbReference type="InterPro" id="IPR001648">
    <property type="entry name" value="Ribosomal_bS18"/>
</dbReference>
<dbReference type="InterPro" id="IPR018275">
    <property type="entry name" value="Ribosomal_bS18_CS"/>
</dbReference>
<dbReference type="InterPro" id="IPR036870">
    <property type="entry name" value="Ribosomal_bS18_sf"/>
</dbReference>
<dbReference type="NCBIfam" id="TIGR00165">
    <property type="entry name" value="S18"/>
    <property type="match status" value="1"/>
</dbReference>
<dbReference type="PANTHER" id="PTHR13479">
    <property type="entry name" value="30S RIBOSOMAL PROTEIN S18"/>
    <property type="match status" value="1"/>
</dbReference>
<dbReference type="PANTHER" id="PTHR13479:SF40">
    <property type="entry name" value="SMALL RIBOSOMAL SUBUNIT PROTEIN BS18M"/>
    <property type="match status" value="1"/>
</dbReference>
<dbReference type="Pfam" id="PF01084">
    <property type="entry name" value="Ribosomal_S18"/>
    <property type="match status" value="1"/>
</dbReference>
<dbReference type="PRINTS" id="PR00974">
    <property type="entry name" value="RIBOSOMALS18"/>
</dbReference>
<dbReference type="SUPFAM" id="SSF46911">
    <property type="entry name" value="Ribosomal protein S18"/>
    <property type="match status" value="1"/>
</dbReference>
<dbReference type="PROSITE" id="PS00057">
    <property type="entry name" value="RIBOSOMAL_S18"/>
    <property type="match status" value="1"/>
</dbReference>
<gene>
    <name evidence="1" type="primary">rpsR</name>
    <name type="ordered locus">A1G_00410</name>
</gene>
<reference key="1">
    <citation type="submission" date="2007-09" db="EMBL/GenBank/DDBJ databases">
        <title>Complete genome sequence of Rickettsia rickettsii.</title>
        <authorList>
            <person name="Madan A."/>
            <person name="Fahey J."/>
            <person name="Helton E."/>
            <person name="Ketteman M."/>
            <person name="Madan A."/>
            <person name="Rodrigues S."/>
            <person name="Sanchez A."/>
            <person name="Dasch G."/>
            <person name="Eremeeva M."/>
        </authorList>
    </citation>
    <scope>NUCLEOTIDE SEQUENCE [LARGE SCALE GENOMIC DNA]</scope>
    <source>
        <strain>Sheila Smith</strain>
    </source>
</reference>
<comment type="function">
    <text evidence="1">Binds as a heterodimer with protein bS6 to the central domain of the 16S rRNA, where it helps stabilize the platform of the 30S subunit.</text>
</comment>
<comment type="subunit">
    <text evidence="1">Part of the 30S ribosomal subunit. Forms a tight heterodimer with protein bS6.</text>
</comment>
<comment type="similarity">
    <text evidence="1">Belongs to the bacterial ribosomal protein bS18 family.</text>
</comment>
<keyword id="KW-0687">Ribonucleoprotein</keyword>
<keyword id="KW-0689">Ribosomal protein</keyword>
<keyword id="KW-0694">RNA-binding</keyword>
<keyword id="KW-0699">rRNA-binding</keyword>
<sequence length="95" mass="10607">MLKSNNASETAAHKVGDKTAKKVFFRRRKGCPLSVPNAPVIDYKNPELLIKFVSEGGRMLPSRITNVCAKKQRKLNNAIKIARILALLPFVFQAK</sequence>
<evidence type="ECO:0000255" key="1">
    <source>
        <dbReference type="HAMAP-Rule" id="MF_00270"/>
    </source>
</evidence>
<evidence type="ECO:0000305" key="2"/>
<feature type="chain" id="PRO_1000003594" description="Small ribosomal subunit protein bS18">
    <location>
        <begin position="1"/>
        <end position="95"/>
    </location>
</feature>
<organism>
    <name type="scientific">Rickettsia rickettsii (strain Sheila Smith)</name>
    <dbReference type="NCBI Taxonomy" id="392021"/>
    <lineage>
        <taxon>Bacteria</taxon>
        <taxon>Pseudomonadati</taxon>
        <taxon>Pseudomonadota</taxon>
        <taxon>Alphaproteobacteria</taxon>
        <taxon>Rickettsiales</taxon>
        <taxon>Rickettsiaceae</taxon>
        <taxon>Rickettsieae</taxon>
        <taxon>Rickettsia</taxon>
        <taxon>spotted fever group</taxon>
    </lineage>
</organism>
<proteinExistence type="inferred from homology"/>
<accession>A8GQJ5</accession>